<organism>
    <name type="scientific">Alteromonas sp. (strain LOR)</name>
    <dbReference type="NCBI Taxonomy" id="1537994"/>
    <lineage>
        <taxon>Bacteria</taxon>
        <taxon>Pseudomonadati</taxon>
        <taxon>Pseudomonadota</taxon>
        <taxon>Gammaproteobacteria</taxon>
        <taxon>Alteromonadales</taxon>
        <taxon>Alteromonadaceae</taxon>
        <taxon>Alteromonas/Salinimonas group</taxon>
        <taxon>Alteromonas</taxon>
    </lineage>
</organism>
<sequence length="528" mass="59635">MKINLSMRELVSRLSTTLKTAIALSVLTACTANDSVSLTSNISNTSGVLLESQTKITDGALHFDGKKLNHNTFENPSKSQAYDYFFGRNISAHGDAVKPYKHFVFMTWYKGGKEERNVMLSRFNTKTGVVKTIQFPHRHTGFRGDPLVGESHNTIGLAVSPLNGTIHMVYDMHAYVDDDETGRFKGRFVDDFFRYSFSVAGAADVPDDEFTLEQFVKDTSELSQGADDYKHLTMTGNLQDKENFSALTYPKFYTSDDGELLHYMRWGGNNNGAYYFNKYDAKNQKWTRFTPFNHKDQKTHGNAYNWGLYGQMKYINGKLRVGFQQRSANNDDRFKYQNGVYYAYSDHPDGLGNWKNVDGEDMTWPLVNSDEIKIFEPGDYIDHTAPNSVHIVTGFDWTVTENDDVHFITHVRSTDTKRSDYKEVSIHAFKPANAVDFTITTDFTGADSIYTSGDSIFIIGLKNGYPFVEKAKGGSNDFEVVYQQASGVKFDHGTIHIENGKAYYYLMEKGAGNALPLHLQVIDLGVTE</sequence>
<accession>A0A109PTH9</accession>
<reference key="1">
    <citation type="journal article" date="2016" name="J. Biol. Chem.">
        <title>New family of ulvan lyases identified in three isolates from the Alteromonadales order.</title>
        <authorList>
            <person name="Kopel M."/>
            <person name="Helbert W."/>
            <person name="Belnik Y."/>
            <person name="Buravenkov V."/>
            <person name="Herman A."/>
            <person name="Banin E."/>
        </authorList>
    </citation>
    <scope>NUCLEOTIDE SEQUENCE [GENOMIC DNA]</scope>
    <scope>FUNCTION</scope>
    <scope>CATALYTIC ACTIVITY</scope>
    <scope>BIOPHYSICOCHEMICAL PROPERTIES</scope>
    <scope>SUBCELLULAR LOCATION</scope>
    <source>
        <strain>LOR</strain>
    </source>
</reference>
<reference key="2">
    <citation type="journal article" date="2014" name="Genome Announc.">
        <title>Draft genome sequences of two ulvan-degrading isolates, strains LTR and LOR, that belong to the Alteromonas genus.</title>
        <authorList>
            <person name="Kopel M."/>
            <person name="Helbert W."/>
            <person name="Henrissat B."/>
            <person name="Doniger T."/>
            <person name="Banin E."/>
        </authorList>
    </citation>
    <scope>NUCLEOTIDE SEQUENCE [LARGE SCALE GENOMIC DNA]</scope>
    <source>
        <strain>LOR</strain>
    </source>
</reference>
<reference key="3">
    <citation type="journal article" date="2017" name="Algal Res.">
        <title>Functional characterization of a novel 'ulvan utilization loci' found in Alteromonas sp. LOR genome.</title>
        <authorList>
            <person name="Foran E."/>
            <person name="Buravenkov V."/>
            <person name="Kopel M."/>
            <person name="Mizrahi N."/>
            <person name="Shoshani S."/>
            <person name="Helbert W."/>
            <person name="Banin E."/>
        </authorList>
    </citation>
    <scope>FUNCTION</scope>
</reference>
<reference evidence="6 7 8" key="4">
    <citation type="journal article" date="2018" name="J. Biol. Chem.">
        <title>Structure-function analyses of a PL24 family ulvan lyase reveal key features and suggest its catalytic mechanism.</title>
        <authorList>
            <person name="Ulaganathan T."/>
            <person name="Helbert W."/>
            <person name="Kopel M."/>
            <person name="Banin E."/>
            <person name="Cygler M."/>
        </authorList>
    </citation>
    <scope>X-RAY CRYSTALLOGRAPHY (1.90 ANGSTROMS) OF 32-528</scope>
    <scope>MUTAGENESIS OF HIS-152; HIS-173; TYR-249; ARG-265 AND ARG-326</scope>
</reference>
<gene>
    <name type="ORF">LOR_107</name>
</gene>
<comment type="function">
    <text evidence="2">Ulvan lyase involved in ulvan degradation. Ulvan is the main polysaccharide component of the Ulvales (green seaweed) cell wall. It is composed of disaccharide building blocks comprising 3-sulfated rhamnose (Rha3S) linked to D-glucuronic acid (GlcA), L-iduronic acid (IduA), or D-xylose (Xyl). Ulvan lyase catalyzes preferentially the endolytic cleavage of the glycosidic bond between Rha3S and the uronic acid GlcA, but not IduA, producing oligosaccharides that have unsaturated 4-deoxy-L-threo-hex-4-enopyranosiduronic acid (deltaUA) at the non-reducing end. The most abundant end products in the degradation of the ulvan polysaccharide were deltaUA-Rha3S disaccharides and deltaUA-Rha3S-IduA-Rha3S and deltaUA-Rha3S-Xyl-Rha3S tetrasaccharides.</text>
</comment>
<comment type="biophysicochemical properties">
    <phDependence>
        <text evidence="2">Optimum pH is 8.</text>
    </phDependence>
    <temperatureDependence>
        <text evidence="2">Optimum temperature is 40 degrees Celsius.</text>
    </temperatureDependence>
</comment>
<comment type="subcellular location">
    <subcellularLocation>
        <location evidence="2">Secreted</location>
    </subcellularLocation>
    <subcellularLocation>
        <location evidence="1">Cell membrane</location>
        <topology evidence="1">Lipid-anchor</topology>
    </subcellularLocation>
</comment>
<comment type="similarity">
    <text evidence="4">Belongs to the polysaccharide lyase 24 family.</text>
</comment>
<evidence type="ECO:0000255" key="1">
    <source>
        <dbReference type="PROSITE-ProRule" id="PRU00303"/>
    </source>
</evidence>
<evidence type="ECO:0000269" key="2">
    <source>
    </source>
</evidence>
<evidence type="ECO:0000269" key="3">
    <source>
    </source>
</evidence>
<evidence type="ECO:0000305" key="4"/>
<evidence type="ECO:0000305" key="5">
    <source>
    </source>
</evidence>
<evidence type="ECO:0007744" key="6">
    <source>
        <dbReference type="PDB" id="6BYP"/>
    </source>
</evidence>
<evidence type="ECO:0007744" key="7">
    <source>
        <dbReference type="PDB" id="6BYT"/>
    </source>
</evidence>
<evidence type="ECO:0007744" key="8">
    <source>
        <dbReference type="PDB" id="6BYX"/>
    </source>
</evidence>
<evidence type="ECO:0007829" key="9">
    <source>
        <dbReference type="PDB" id="6BYP"/>
    </source>
</evidence>
<evidence type="ECO:0007829" key="10">
    <source>
        <dbReference type="PDB" id="6BYT"/>
    </source>
</evidence>
<evidence type="ECO:0007829" key="11">
    <source>
        <dbReference type="PDB" id="6JQ9"/>
    </source>
</evidence>
<proteinExistence type="evidence at protein level"/>
<keyword id="KW-0002">3D-structure</keyword>
<keyword id="KW-0106">Calcium</keyword>
<keyword id="KW-1003">Cell membrane</keyword>
<keyword id="KW-0449">Lipoprotein</keyword>
<keyword id="KW-0456">Lyase</keyword>
<keyword id="KW-0472">Membrane</keyword>
<keyword id="KW-0479">Metal-binding</keyword>
<keyword id="KW-0564">Palmitate</keyword>
<keyword id="KW-0964">Secreted</keyword>
<keyword id="KW-0732">Signal</keyword>
<protein>
    <recommendedName>
        <fullName>Ulvan lyase, short isoform</fullName>
        <ecNumber evidence="2">4.2.2.-</ecNumber>
    </recommendedName>
</protein>
<dbReference type="EC" id="4.2.2.-" evidence="2"/>
<dbReference type="EMBL" id="KU168251">
    <property type="protein sequence ID" value="AMA19991.1"/>
    <property type="molecule type" value="Genomic_DNA"/>
</dbReference>
<dbReference type="PDB" id="6BYP">
    <property type="method" value="X-ray"/>
    <property type="resolution" value="1.90 A"/>
    <property type="chains" value="A/B=32-528"/>
</dbReference>
<dbReference type="PDB" id="6BYT">
    <property type="method" value="X-ray"/>
    <property type="resolution" value="2.20 A"/>
    <property type="chains" value="A/B=32-528"/>
</dbReference>
<dbReference type="PDB" id="6BYX">
    <property type="method" value="X-ray"/>
    <property type="resolution" value="2.21 A"/>
    <property type="chains" value="A/B=32-528"/>
</dbReference>
<dbReference type="PDB" id="6JQ9">
    <property type="method" value="X-ray"/>
    <property type="resolution" value="1.81 A"/>
    <property type="chains" value="A/B=45-527"/>
</dbReference>
<dbReference type="PDBsum" id="6BYP"/>
<dbReference type="PDBsum" id="6BYT"/>
<dbReference type="PDBsum" id="6BYX"/>
<dbReference type="PDBsum" id="6JQ9"/>
<dbReference type="SMR" id="A0A109PTH9"/>
<dbReference type="GO" id="GO:0005576">
    <property type="term" value="C:extracellular region"/>
    <property type="evidence" value="ECO:0007669"/>
    <property type="project" value="UniProtKB-SubCell"/>
</dbReference>
<dbReference type="GO" id="GO:0005886">
    <property type="term" value="C:plasma membrane"/>
    <property type="evidence" value="ECO:0007669"/>
    <property type="project" value="UniProtKB-SubCell"/>
</dbReference>
<dbReference type="GO" id="GO:0016829">
    <property type="term" value="F:lyase activity"/>
    <property type="evidence" value="ECO:0007669"/>
    <property type="project" value="UniProtKB-KW"/>
</dbReference>
<dbReference type="GO" id="GO:0046872">
    <property type="term" value="F:metal ion binding"/>
    <property type="evidence" value="ECO:0007669"/>
    <property type="project" value="UniProtKB-KW"/>
</dbReference>
<dbReference type="Pfam" id="PF15892">
    <property type="entry name" value="BNR_4"/>
    <property type="match status" value="1"/>
</dbReference>
<dbReference type="PROSITE" id="PS51257">
    <property type="entry name" value="PROKAR_LIPOPROTEIN"/>
    <property type="match status" value="1"/>
</dbReference>
<name>UL24S_ALTSL</name>
<feature type="signal peptide" evidence="1">
    <location>
        <begin position="1"/>
        <end position="29"/>
    </location>
</feature>
<feature type="chain" id="PRO_0000448321" description="Ulvan lyase, short isoform" evidence="1">
    <location>
        <begin position="30"/>
        <end position="528"/>
    </location>
</feature>
<feature type="active site" description="Proton donor/acceptor" evidence="5">
    <location>
        <position position="152"/>
    </location>
</feature>
<feature type="binding site" evidence="3">
    <location>
        <begin position="151"/>
        <end position="152"/>
    </location>
    <ligand>
        <name>substrate</name>
    </ligand>
</feature>
<feature type="binding site" evidence="3">
    <location>
        <position position="218"/>
    </location>
    <ligand>
        <name>Ca(2+)</name>
        <dbReference type="ChEBI" id="CHEBI:29108"/>
        <label>1</label>
        <note>structural</note>
    </ligand>
</feature>
<feature type="binding site" evidence="3">
    <location>
        <position position="228"/>
    </location>
    <ligand>
        <name>Ca(2+)</name>
        <dbReference type="ChEBI" id="CHEBI:29108"/>
        <label>1</label>
        <note>structural</note>
    </ligand>
</feature>
<feature type="binding site" evidence="3">
    <location>
        <position position="230"/>
    </location>
    <ligand>
        <name>Ca(2+)</name>
        <dbReference type="ChEBI" id="CHEBI:29108"/>
        <label>1</label>
        <note>structural</note>
    </ligand>
</feature>
<feature type="binding site" evidence="3">
    <location>
        <position position="309"/>
    </location>
    <ligand>
        <name>substrate</name>
    </ligand>
</feature>
<feature type="binding site" evidence="3">
    <location>
        <position position="326"/>
    </location>
    <ligand>
        <name>substrate</name>
    </ligand>
</feature>
<feature type="binding site" evidence="3">
    <location>
        <position position="329"/>
    </location>
    <ligand>
        <name>Ca(2+)</name>
        <dbReference type="ChEBI" id="CHEBI:29108"/>
        <label>2</label>
        <note>structural</note>
    </ligand>
</feature>
<feature type="binding site" evidence="3">
    <location>
        <position position="332"/>
    </location>
    <ligand>
        <name>Ca(2+)</name>
        <dbReference type="ChEBI" id="CHEBI:29108"/>
        <label>2</label>
        <note>structural</note>
    </ligand>
</feature>
<feature type="binding site" evidence="3">
    <location>
        <position position="334"/>
    </location>
    <ligand>
        <name>Ca(2+)</name>
        <dbReference type="ChEBI" id="CHEBI:29108"/>
        <label>2</label>
        <note>structural</note>
    </ligand>
</feature>
<feature type="binding site" evidence="3">
    <location>
        <position position="390"/>
    </location>
    <ligand>
        <name>substrate</name>
    </ligand>
</feature>
<feature type="site" description="Neutralizes the sugar carboxylate group at subsite +1" evidence="5">
    <location>
        <position position="265"/>
    </location>
</feature>
<feature type="lipid moiety-binding region" description="N-palmitoyl cysteine" evidence="1">
    <location>
        <position position="30"/>
    </location>
</feature>
<feature type="lipid moiety-binding region" description="S-diacylglycerol cysteine" evidence="1">
    <location>
        <position position="30"/>
    </location>
</feature>
<feature type="mutagenesis site" description="Abolishes catalytic activity." evidence="3">
    <original>H</original>
    <variation>A</variation>
    <location>
        <position position="152"/>
    </location>
</feature>
<feature type="mutagenesis site" description="Abolishes catalytic activity." evidence="3">
    <original>H</original>
    <variation>A</variation>
    <location>
        <position position="173"/>
    </location>
</feature>
<feature type="mutagenesis site" description="Greatly reduces catalytic activity." evidence="3">
    <original>Y</original>
    <variation>F</variation>
    <location>
        <position position="249"/>
    </location>
</feature>
<feature type="mutagenesis site" description="Abolishes catalytic activity." evidence="3">
    <original>R</original>
    <variation>A</variation>
    <location>
        <position position="265"/>
    </location>
</feature>
<feature type="mutagenesis site" description="Abolishes catalytic activity." evidence="3">
    <original>R</original>
    <variation>A</variation>
    <location>
        <position position="326"/>
    </location>
</feature>
<feature type="strand" evidence="11">
    <location>
        <begin position="49"/>
        <end position="61"/>
    </location>
</feature>
<feature type="turn" evidence="11">
    <location>
        <begin position="70"/>
        <end position="74"/>
    </location>
</feature>
<feature type="strand" evidence="11">
    <location>
        <begin position="79"/>
        <end position="81"/>
    </location>
</feature>
<feature type="strand" evidence="11">
    <location>
        <begin position="84"/>
        <end position="86"/>
    </location>
</feature>
<feature type="strand" evidence="11">
    <location>
        <begin position="97"/>
        <end position="100"/>
    </location>
</feature>
<feature type="strand" evidence="11">
    <location>
        <begin position="103"/>
        <end position="112"/>
    </location>
</feature>
<feature type="turn" evidence="9">
    <location>
        <begin position="113"/>
        <end position="115"/>
    </location>
</feature>
<feature type="strand" evidence="11">
    <location>
        <begin position="117"/>
        <end position="124"/>
    </location>
</feature>
<feature type="turn" evidence="11">
    <location>
        <begin position="125"/>
        <end position="127"/>
    </location>
</feature>
<feature type="strand" evidence="11">
    <location>
        <begin position="130"/>
        <end position="138"/>
    </location>
</feature>
<feature type="strand" evidence="11">
    <location>
        <begin position="155"/>
        <end position="159"/>
    </location>
</feature>
<feature type="turn" evidence="11">
    <location>
        <begin position="161"/>
        <end position="163"/>
    </location>
</feature>
<feature type="strand" evidence="11">
    <location>
        <begin position="166"/>
        <end position="171"/>
    </location>
</feature>
<feature type="turn" evidence="11">
    <location>
        <begin position="183"/>
        <end position="190"/>
    </location>
</feature>
<feature type="strand" evidence="11">
    <location>
        <begin position="195"/>
        <end position="198"/>
    </location>
</feature>
<feature type="helix" evidence="11">
    <location>
        <begin position="202"/>
        <end position="204"/>
    </location>
</feature>
<feature type="helix" evidence="11">
    <location>
        <begin position="207"/>
        <end position="209"/>
    </location>
</feature>
<feature type="helix" evidence="11">
    <location>
        <begin position="212"/>
        <end position="214"/>
    </location>
</feature>
<feature type="strand" evidence="11">
    <location>
        <begin position="234"/>
        <end position="236"/>
    </location>
</feature>
<feature type="helix" evidence="11">
    <location>
        <begin position="238"/>
        <end position="244"/>
    </location>
</feature>
<feature type="strand" evidence="11">
    <location>
        <begin position="245"/>
        <end position="254"/>
    </location>
</feature>
<feature type="strand" evidence="11">
    <location>
        <begin position="260"/>
        <end position="268"/>
    </location>
</feature>
<feature type="strand" evidence="11">
    <location>
        <begin position="271"/>
        <end position="280"/>
    </location>
</feature>
<feature type="turn" evidence="11">
    <location>
        <begin position="281"/>
        <end position="284"/>
    </location>
</feature>
<feature type="strand" evidence="11">
    <location>
        <begin position="290"/>
        <end position="293"/>
    </location>
</feature>
<feature type="helix" evidence="11">
    <location>
        <begin position="297"/>
        <end position="300"/>
    </location>
</feature>
<feature type="strand" evidence="11">
    <location>
        <begin position="306"/>
        <end position="315"/>
    </location>
</feature>
<feature type="strand" evidence="11">
    <location>
        <begin position="318"/>
        <end position="328"/>
    </location>
</feature>
<feature type="strand" evidence="11">
    <location>
        <begin position="331"/>
        <end position="336"/>
    </location>
</feature>
<feature type="strand" evidence="11">
    <location>
        <begin position="338"/>
        <end position="347"/>
    </location>
</feature>
<feature type="strand" evidence="9">
    <location>
        <begin position="350"/>
        <end position="352"/>
    </location>
</feature>
<feature type="strand" evidence="10">
    <location>
        <begin position="354"/>
        <end position="356"/>
    </location>
</feature>
<feature type="strand" evidence="11">
    <location>
        <begin position="364"/>
        <end position="366"/>
    </location>
</feature>
<feature type="helix" evidence="11">
    <location>
        <begin position="369"/>
        <end position="372"/>
    </location>
</feature>
<feature type="strand" evidence="11">
    <location>
        <begin position="373"/>
        <end position="375"/>
    </location>
</feature>
<feature type="helix" evidence="11">
    <location>
        <begin position="377"/>
        <end position="380"/>
    </location>
</feature>
<feature type="strand" evidence="11">
    <location>
        <begin position="396"/>
        <end position="399"/>
    </location>
</feature>
<feature type="strand" evidence="11">
    <location>
        <begin position="405"/>
        <end position="414"/>
    </location>
</feature>
<feature type="strand" evidence="11">
    <location>
        <begin position="423"/>
        <end position="430"/>
    </location>
</feature>
<feature type="strand" evidence="11">
    <location>
        <begin position="438"/>
        <end position="441"/>
    </location>
</feature>
<feature type="strand" evidence="11">
    <location>
        <begin position="450"/>
        <end position="452"/>
    </location>
</feature>
<feature type="strand" evidence="11">
    <location>
        <begin position="455"/>
        <end position="462"/>
    </location>
</feature>
<feature type="strand" evidence="11">
    <location>
        <begin position="465"/>
        <end position="472"/>
    </location>
</feature>
<feature type="strand" evidence="11">
    <location>
        <begin position="479"/>
        <end position="483"/>
    </location>
</feature>
<feature type="strand" evidence="11">
    <location>
        <begin position="486"/>
        <end position="488"/>
    </location>
</feature>
<feature type="strand" evidence="11">
    <location>
        <begin position="490"/>
        <end position="498"/>
    </location>
</feature>
<feature type="strand" evidence="11">
    <location>
        <begin position="501"/>
        <end position="508"/>
    </location>
</feature>
<feature type="strand" evidence="11">
    <location>
        <begin position="511"/>
        <end position="523"/>
    </location>
</feature>